<feature type="chain" id="PRO_0000384808" description="Ribosome maturation factor RimP">
    <location>
        <begin position="1"/>
        <end position="150"/>
    </location>
</feature>
<accession>A9R5A1</accession>
<reference key="1">
    <citation type="journal article" date="2010" name="J. Bacteriol.">
        <title>Genome sequence of the deep-rooted Yersinia pestis strain Angola reveals new insights into the evolution and pangenome of the plague bacterium.</title>
        <authorList>
            <person name="Eppinger M."/>
            <person name="Worsham P.L."/>
            <person name="Nikolich M.P."/>
            <person name="Riley D.R."/>
            <person name="Sebastian Y."/>
            <person name="Mou S."/>
            <person name="Achtman M."/>
            <person name="Lindler L.E."/>
            <person name="Ravel J."/>
        </authorList>
    </citation>
    <scope>NUCLEOTIDE SEQUENCE [LARGE SCALE GENOMIC DNA]</scope>
    <source>
        <strain>Angola</strain>
    </source>
</reference>
<comment type="function">
    <text evidence="1">Required for maturation of 30S ribosomal subunits.</text>
</comment>
<comment type="subcellular location">
    <subcellularLocation>
        <location evidence="1">Cytoplasm</location>
    </subcellularLocation>
</comment>
<comment type="similarity">
    <text evidence="1">Belongs to the RimP family.</text>
</comment>
<name>RIMP_YERPG</name>
<evidence type="ECO:0000255" key="1">
    <source>
        <dbReference type="HAMAP-Rule" id="MF_01077"/>
    </source>
</evidence>
<proteinExistence type="inferred from homology"/>
<sequence length="150" mass="16701">MSTLEQKLTEIISAPVEALGYELVGIEFIRGRQSTLRIYIDSDDGITVDACADVSHQVSAVLDVEDPITVAYNLEVSSPGLDRPMFTAEHYTRYLGEEVTLVLRMAMQNRRKWQGIIKAVDGEMITVTVDGKDEVFALSNIQKANLVPHF</sequence>
<gene>
    <name evidence="1" type="primary">rimP</name>
    <name type="ordered locus">YpAngola_A3991</name>
</gene>
<organism>
    <name type="scientific">Yersinia pestis bv. Antiqua (strain Angola)</name>
    <dbReference type="NCBI Taxonomy" id="349746"/>
    <lineage>
        <taxon>Bacteria</taxon>
        <taxon>Pseudomonadati</taxon>
        <taxon>Pseudomonadota</taxon>
        <taxon>Gammaproteobacteria</taxon>
        <taxon>Enterobacterales</taxon>
        <taxon>Yersiniaceae</taxon>
        <taxon>Yersinia</taxon>
    </lineage>
</organism>
<protein>
    <recommendedName>
        <fullName evidence="1">Ribosome maturation factor RimP</fullName>
    </recommendedName>
</protein>
<dbReference type="EMBL" id="CP000901">
    <property type="protein sequence ID" value="ABX85785.1"/>
    <property type="molecule type" value="Genomic_DNA"/>
</dbReference>
<dbReference type="RefSeq" id="WP_002222054.1">
    <property type="nucleotide sequence ID" value="NZ_CP009935.1"/>
</dbReference>
<dbReference type="SMR" id="A9R5A1"/>
<dbReference type="GeneID" id="97457868"/>
<dbReference type="KEGG" id="ypg:YpAngola_A3991"/>
<dbReference type="PATRIC" id="fig|349746.12.peg.715"/>
<dbReference type="GO" id="GO:0005829">
    <property type="term" value="C:cytosol"/>
    <property type="evidence" value="ECO:0007669"/>
    <property type="project" value="TreeGrafter"/>
</dbReference>
<dbReference type="GO" id="GO:0000028">
    <property type="term" value="P:ribosomal small subunit assembly"/>
    <property type="evidence" value="ECO:0007669"/>
    <property type="project" value="TreeGrafter"/>
</dbReference>
<dbReference type="GO" id="GO:0006412">
    <property type="term" value="P:translation"/>
    <property type="evidence" value="ECO:0007669"/>
    <property type="project" value="TreeGrafter"/>
</dbReference>
<dbReference type="CDD" id="cd01734">
    <property type="entry name" value="YlxS_C"/>
    <property type="match status" value="1"/>
</dbReference>
<dbReference type="FunFam" id="2.30.30.180:FF:000001">
    <property type="entry name" value="Ribosome maturation factor RimP"/>
    <property type="match status" value="1"/>
</dbReference>
<dbReference type="FunFam" id="3.30.300.70:FF:000001">
    <property type="entry name" value="Ribosome maturation factor RimP"/>
    <property type="match status" value="1"/>
</dbReference>
<dbReference type="Gene3D" id="2.30.30.180">
    <property type="entry name" value="Ribosome maturation factor RimP, C-terminal domain"/>
    <property type="match status" value="1"/>
</dbReference>
<dbReference type="Gene3D" id="3.30.300.70">
    <property type="entry name" value="RimP-like superfamily, N-terminal"/>
    <property type="match status" value="1"/>
</dbReference>
<dbReference type="HAMAP" id="MF_01077">
    <property type="entry name" value="RimP"/>
    <property type="match status" value="1"/>
</dbReference>
<dbReference type="InterPro" id="IPR003728">
    <property type="entry name" value="Ribosome_maturation_RimP"/>
</dbReference>
<dbReference type="InterPro" id="IPR028998">
    <property type="entry name" value="RimP_C"/>
</dbReference>
<dbReference type="InterPro" id="IPR036847">
    <property type="entry name" value="RimP_C_sf"/>
</dbReference>
<dbReference type="InterPro" id="IPR028989">
    <property type="entry name" value="RimP_N"/>
</dbReference>
<dbReference type="InterPro" id="IPR035956">
    <property type="entry name" value="RimP_N_sf"/>
</dbReference>
<dbReference type="NCBIfam" id="NF000927">
    <property type="entry name" value="PRK00092.1-1"/>
    <property type="match status" value="1"/>
</dbReference>
<dbReference type="PANTHER" id="PTHR33867">
    <property type="entry name" value="RIBOSOME MATURATION FACTOR RIMP"/>
    <property type="match status" value="1"/>
</dbReference>
<dbReference type="PANTHER" id="PTHR33867:SF1">
    <property type="entry name" value="RIBOSOME MATURATION FACTOR RIMP"/>
    <property type="match status" value="1"/>
</dbReference>
<dbReference type="Pfam" id="PF17384">
    <property type="entry name" value="DUF150_C"/>
    <property type="match status" value="1"/>
</dbReference>
<dbReference type="Pfam" id="PF02576">
    <property type="entry name" value="RimP_N"/>
    <property type="match status" value="1"/>
</dbReference>
<dbReference type="SUPFAM" id="SSF74942">
    <property type="entry name" value="YhbC-like, C-terminal domain"/>
    <property type="match status" value="1"/>
</dbReference>
<dbReference type="SUPFAM" id="SSF75420">
    <property type="entry name" value="YhbC-like, N-terminal domain"/>
    <property type="match status" value="1"/>
</dbReference>
<keyword id="KW-0963">Cytoplasm</keyword>
<keyword id="KW-0690">Ribosome biogenesis</keyword>